<accession>Q0TEB2</accession>
<name>ISPF_ECOL5</name>
<gene>
    <name evidence="1" type="primary">ispF</name>
    <name type="ordered locus">ECP_2728</name>
</gene>
<feature type="chain" id="PRO_1000022832" description="2-C-methyl-D-erythritol 2,4-cyclodiphosphate synthase">
    <location>
        <begin position="1"/>
        <end position="159"/>
    </location>
</feature>
<feature type="binding site" evidence="1">
    <location>
        <begin position="8"/>
        <end position="10"/>
    </location>
    <ligand>
        <name>4-CDP-2-C-methyl-D-erythritol 2-phosphate</name>
        <dbReference type="ChEBI" id="CHEBI:57919"/>
    </ligand>
</feature>
<feature type="binding site" evidence="1">
    <location>
        <position position="8"/>
    </location>
    <ligand>
        <name>a divalent metal cation</name>
        <dbReference type="ChEBI" id="CHEBI:60240"/>
    </ligand>
</feature>
<feature type="binding site" evidence="1">
    <location>
        <position position="10"/>
    </location>
    <ligand>
        <name>a divalent metal cation</name>
        <dbReference type="ChEBI" id="CHEBI:60240"/>
    </ligand>
</feature>
<feature type="binding site" evidence="1">
    <location>
        <begin position="34"/>
        <end position="35"/>
    </location>
    <ligand>
        <name>4-CDP-2-C-methyl-D-erythritol 2-phosphate</name>
        <dbReference type="ChEBI" id="CHEBI:57919"/>
    </ligand>
</feature>
<feature type="binding site" evidence="1">
    <location>
        <position position="42"/>
    </location>
    <ligand>
        <name>a divalent metal cation</name>
        <dbReference type="ChEBI" id="CHEBI:60240"/>
    </ligand>
</feature>
<feature type="binding site" evidence="1">
    <location>
        <begin position="56"/>
        <end position="58"/>
    </location>
    <ligand>
        <name>4-CDP-2-C-methyl-D-erythritol 2-phosphate</name>
        <dbReference type="ChEBI" id="CHEBI:57919"/>
    </ligand>
</feature>
<feature type="binding site" evidence="1">
    <location>
        <begin position="61"/>
        <end position="65"/>
    </location>
    <ligand>
        <name>4-CDP-2-C-methyl-D-erythritol 2-phosphate</name>
        <dbReference type="ChEBI" id="CHEBI:57919"/>
    </ligand>
</feature>
<feature type="binding site" evidence="1">
    <location>
        <begin position="100"/>
        <end position="106"/>
    </location>
    <ligand>
        <name>4-CDP-2-C-methyl-D-erythritol 2-phosphate</name>
        <dbReference type="ChEBI" id="CHEBI:57919"/>
    </ligand>
</feature>
<feature type="binding site" evidence="1">
    <location>
        <begin position="132"/>
        <end position="135"/>
    </location>
    <ligand>
        <name>4-CDP-2-C-methyl-D-erythritol 2-phosphate</name>
        <dbReference type="ChEBI" id="CHEBI:57919"/>
    </ligand>
</feature>
<feature type="binding site" evidence="1">
    <location>
        <position position="139"/>
    </location>
    <ligand>
        <name>4-CDP-2-C-methyl-D-erythritol 2-phosphate</name>
        <dbReference type="ChEBI" id="CHEBI:57919"/>
    </ligand>
</feature>
<feature type="binding site" evidence="1">
    <location>
        <position position="142"/>
    </location>
    <ligand>
        <name>4-CDP-2-C-methyl-D-erythritol 2-phosphate</name>
        <dbReference type="ChEBI" id="CHEBI:57919"/>
    </ligand>
</feature>
<feature type="site" description="Transition state stabilizer" evidence="1">
    <location>
        <position position="34"/>
    </location>
</feature>
<feature type="site" description="Transition state stabilizer" evidence="1">
    <location>
        <position position="133"/>
    </location>
</feature>
<evidence type="ECO:0000255" key="1">
    <source>
        <dbReference type="HAMAP-Rule" id="MF_00107"/>
    </source>
</evidence>
<protein>
    <recommendedName>
        <fullName evidence="1">2-C-methyl-D-erythritol 2,4-cyclodiphosphate synthase</fullName>
        <shortName evidence="1">MECDP-synthase</shortName>
        <shortName evidence="1">MECPP-synthase</shortName>
        <shortName evidence="1">MECPS</shortName>
        <ecNumber evidence="1">4.6.1.12</ecNumber>
    </recommendedName>
</protein>
<proteinExistence type="inferred from homology"/>
<keyword id="KW-0414">Isoprene biosynthesis</keyword>
<keyword id="KW-0456">Lyase</keyword>
<keyword id="KW-0479">Metal-binding</keyword>
<sequence>MRIGHGFDVHAFGGEGPIIIGGVRIPYEKGLLAHSDGDVVLHALTDALLGAAALGDIGKLFPDTDPAFKGADSRELLREAWRRIQAKGYALGNVDVTIIAQAPRMLPHIPQMRVFIAEDLGCHMDDVNVKATTTEKLGFTGRGEGIACEAVALLIKATK</sequence>
<reference key="1">
    <citation type="journal article" date="2006" name="Mol. Microbiol.">
        <title>Role of pathogenicity island-associated integrases in the genome plasticity of uropathogenic Escherichia coli strain 536.</title>
        <authorList>
            <person name="Hochhut B."/>
            <person name="Wilde C."/>
            <person name="Balling G."/>
            <person name="Middendorf B."/>
            <person name="Dobrindt U."/>
            <person name="Brzuszkiewicz E."/>
            <person name="Gottschalk G."/>
            <person name="Carniel E."/>
            <person name="Hacker J."/>
        </authorList>
    </citation>
    <scope>NUCLEOTIDE SEQUENCE [LARGE SCALE GENOMIC DNA]</scope>
    <source>
        <strain>536 / UPEC</strain>
    </source>
</reference>
<comment type="function">
    <text evidence="1">Involved in the biosynthesis of isopentenyl diphosphate (IPP) and dimethylallyl diphosphate (DMAPP), two major building blocks of isoprenoid compounds. Catalyzes the conversion of 4-diphosphocytidyl-2-C-methyl-D-erythritol 2-phosphate (CDP-ME2P) to 2-C-methyl-D-erythritol 2,4-cyclodiphosphate (ME-CPP) with a corresponding release of cytidine 5-monophosphate (CMP).</text>
</comment>
<comment type="catalytic activity">
    <reaction evidence="1">
        <text>4-CDP-2-C-methyl-D-erythritol 2-phosphate = 2-C-methyl-D-erythritol 2,4-cyclic diphosphate + CMP</text>
        <dbReference type="Rhea" id="RHEA:23864"/>
        <dbReference type="ChEBI" id="CHEBI:57919"/>
        <dbReference type="ChEBI" id="CHEBI:58483"/>
        <dbReference type="ChEBI" id="CHEBI:60377"/>
        <dbReference type="EC" id="4.6.1.12"/>
    </reaction>
</comment>
<comment type="cofactor">
    <cofactor evidence="1">
        <name>a divalent metal cation</name>
        <dbReference type="ChEBI" id="CHEBI:60240"/>
    </cofactor>
    <text evidence="1">Binds 1 divalent metal cation per subunit.</text>
</comment>
<comment type="pathway">
    <text evidence="1">Isoprenoid biosynthesis; isopentenyl diphosphate biosynthesis via DXP pathway; isopentenyl diphosphate from 1-deoxy-D-xylulose 5-phosphate: step 4/6.</text>
</comment>
<comment type="subunit">
    <text evidence="1">Homotrimer.</text>
</comment>
<comment type="similarity">
    <text evidence="1">Belongs to the IspF family.</text>
</comment>
<dbReference type="EC" id="4.6.1.12" evidence="1"/>
<dbReference type="EMBL" id="CP000247">
    <property type="protein sequence ID" value="ABG70717.1"/>
    <property type="molecule type" value="Genomic_DNA"/>
</dbReference>
<dbReference type="RefSeq" id="WP_001219252.1">
    <property type="nucleotide sequence ID" value="NC_008253.1"/>
</dbReference>
<dbReference type="SMR" id="Q0TEB2"/>
<dbReference type="KEGG" id="ecp:ECP_2728"/>
<dbReference type="HOGENOM" id="CLU_084630_2_0_6"/>
<dbReference type="UniPathway" id="UPA00056">
    <property type="reaction ID" value="UER00095"/>
</dbReference>
<dbReference type="Proteomes" id="UP000009182">
    <property type="component" value="Chromosome"/>
</dbReference>
<dbReference type="GO" id="GO:0008685">
    <property type="term" value="F:2-C-methyl-D-erythritol 2,4-cyclodiphosphate synthase activity"/>
    <property type="evidence" value="ECO:0007669"/>
    <property type="project" value="UniProtKB-UniRule"/>
</dbReference>
<dbReference type="GO" id="GO:0046872">
    <property type="term" value="F:metal ion binding"/>
    <property type="evidence" value="ECO:0007669"/>
    <property type="project" value="UniProtKB-KW"/>
</dbReference>
<dbReference type="GO" id="GO:0019288">
    <property type="term" value="P:isopentenyl diphosphate biosynthetic process, methylerythritol 4-phosphate pathway"/>
    <property type="evidence" value="ECO:0007669"/>
    <property type="project" value="UniProtKB-UniRule"/>
</dbReference>
<dbReference type="GO" id="GO:0016114">
    <property type="term" value="P:terpenoid biosynthetic process"/>
    <property type="evidence" value="ECO:0007669"/>
    <property type="project" value="InterPro"/>
</dbReference>
<dbReference type="CDD" id="cd00554">
    <property type="entry name" value="MECDP_synthase"/>
    <property type="match status" value="1"/>
</dbReference>
<dbReference type="FunFam" id="3.30.1330.50:FF:000001">
    <property type="entry name" value="2-C-methyl-D-erythritol 2,4-cyclodiphosphate synthase"/>
    <property type="match status" value="1"/>
</dbReference>
<dbReference type="Gene3D" id="3.30.1330.50">
    <property type="entry name" value="2-C-methyl-D-erythritol 2,4-cyclodiphosphate synthase"/>
    <property type="match status" value="1"/>
</dbReference>
<dbReference type="HAMAP" id="MF_00107">
    <property type="entry name" value="IspF"/>
    <property type="match status" value="1"/>
</dbReference>
<dbReference type="InterPro" id="IPR003526">
    <property type="entry name" value="MECDP_synthase"/>
</dbReference>
<dbReference type="InterPro" id="IPR020555">
    <property type="entry name" value="MECDP_synthase_CS"/>
</dbReference>
<dbReference type="InterPro" id="IPR036571">
    <property type="entry name" value="MECDP_synthase_sf"/>
</dbReference>
<dbReference type="NCBIfam" id="TIGR00151">
    <property type="entry name" value="ispF"/>
    <property type="match status" value="1"/>
</dbReference>
<dbReference type="PANTHER" id="PTHR43181">
    <property type="entry name" value="2-C-METHYL-D-ERYTHRITOL 2,4-CYCLODIPHOSPHATE SYNTHASE, CHLOROPLASTIC"/>
    <property type="match status" value="1"/>
</dbReference>
<dbReference type="PANTHER" id="PTHR43181:SF1">
    <property type="entry name" value="2-C-METHYL-D-ERYTHRITOL 2,4-CYCLODIPHOSPHATE SYNTHASE, CHLOROPLASTIC"/>
    <property type="match status" value="1"/>
</dbReference>
<dbReference type="Pfam" id="PF02542">
    <property type="entry name" value="YgbB"/>
    <property type="match status" value="1"/>
</dbReference>
<dbReference type="SUPFAM" id="SSF69765">
    <property type="entry name" value="IpsF-like"/>
    <property type="match status" value="1"/>
</dbReference>
<dbReference type="PROSITE" id="PS01350">
    <property type="entry name" value="ISPF"/>
    <property type="match status" value="1"/>
</dbReference>
<organism>
    <name type="scientific">Escherichia coli O6:K15:H31 (strain 536 / UPEC)</name>
    <dbReference type="NCBI Taxonomy" id="362663"/>
    <lineage>
        <taxon>Bacteria</taxon>
        <taxon>Pseudomonadati</taxon>
        <taxon>Pseudomonadota</taxon>
        <taxon>Gammaproteobacteria</taxon>
        <taxon>Enterobacterales</taxon>
        <taxon>Enterobacteriaceae</taxon>
        <taxon>Escherichia</taxon>
    </lineage>
</organism>